<accession>Q72F93</accession>
<gene>
    <name evidence="1" type="primary">coaX</name>
    <name type="ordered locus">DVU_0321</name>
</gene>
<keyword id="KW-0067">ATP-binding</keyword>
<keyword id="KW-0173">Coenzyme A biosynthesis</keyword>
<keyword id="KW-0963">Cytoplasm</keyword>
<keyword id="KW-0418">Kinase</keyword>
<keyword id="KW-0479">Metal-binding</keyword>
<keyword id="KW-0547">Nucleotide-binding</keyword>
<keyword id="KW-0630">Potassium</keyword>
<keyword id="KW-1185">Reference proteome</keyword>
<keyword id="KW-0808">Transferase</keyword>
<proteinExistence type="inferred from homology"/>
<evidence type="ECO:0000255" key="1">
    <source>
        <dbReference type="HAMAP-Rule" id="MF_01274"/>
    </source>
</evidence>
<name>COAX_NITV2</name>
<organism>
    <name type="scientific">Nitratidesulfovibrio vulgaris (strain ATCC 29579 / DSM 644 / CCUG 34227 / NCIMB 8303 / VKM B-1760 / Hildenborough)</name>
    <name type="common">Desulfovibrio vulgaris</name>
    <dbReference type="NCBI Taxonomy" id="882"/>
    <lineage>
        <taxon>Bacteria</taxon>
        <taxon>Pseudomonadati</taxon>
        <taxon>Thermodesulfobacteriota</taxon>
        <taxon>Desulfovibrionia</taxon>
        <taxon>Desulfovibrionales</taxon>
        <taxon>Desulfovibrionaceae</taxon>
        <taxon>Nitratidesulfovibrio</taxon>
    </lineage>
</organism>
<comment type="function">
    <text evidence="1">Catalyzes the phosphorylation of pantothenate (Pan), the first step in CoA biosynthesis.</text>
</comment>
<comment type="catalytic activity">
    <reaction evidence="1">
        <text>(R)-pantothenate + ATP = (R)-4'-phosphopantothenate + ADP + H(+)</text>
        <dbReference type="Rhea" id="RHEA:16373"/>
        <dbReference type="ChEBI" id="CHEBI:10986"/>
        <dbReference type="ChEBI" id="CHEBI:15378"/>
        <dbReference type="ChEBI" id="CHEBI:29032"/>
        <dbReference type="ChEBI" id="CHEBI:30616"/>
        <dbReference type="ChEBI" id="CHEBI:456216"/>
        <dbReference type="EC" id="2.7.1.33"/>
    </reaction>
</comment>
<comment type="cofactor">
    <cofactor evidence="1">
        <name>NH4(+)</name>
        <dbReference type="ChEBI" id="CHEBI:28938"/>
    </cofactor>
    <cofactor evidence="1">
        <name>K(+)</name>
        <dbReference type="ChEBI" id="CHEBI:29103"/>
    </cofactor>
    <text evidence="1">A monovalent cation. Ammonium or potassium.</text>
</comment>
<comment type="pathway">
    <text evidence="1">Cofactor biosynthesis; coenzyme A biosynthesis; CoA from (R)-pantothenate: step 1/5.</text>
</comment>
<comment type="subunit">
    <text evidence="1">Homodimer.</text>
</comment>
<comment type="subcellular location">
    <subcellularLocation>
        <location evidence="1">Cytoplasm</location>
    </subcellularLocation>
</comment>
<comment type="similarity">
    <text evidence="1">Belongs to the type III pantothenate kinase family.</text>
</comment>
<protein>
    <recommendedName>
        <fullName evidence="1">Type III pantothenate kinase</fullName>
        <ecNumber evidence="1">2.7.1.33</ecNumber>
    </recommendedName>
    <alternativeName>
        <fullName evidence="1">PanK-III</fullName>
    </alternativeName>
    <alternativeName>
        <fullName evidence="1">Pantothenic acid kinase</fullName>
    </alternativeName>
</protein>
<sequence length="262" mass="28014">MARHLLLFDIGNTNVKVGIATEGTVLTSYALPTDGTQTGDGFGLALLDIMRHAGLGADDIDACVGSSVVPSLDPLLRHACERFLWRPLQLAHVDLPVPLENRYERPTEVGADRLVAAFAARRLYPDARALVSVDFGTATTFDCVDGDAYLGGLICPGVLSSAGALSSRTAKLPRVSLEVSEDMPVVGRSTTTSLNHGFIFGFAALAEGVTARLRKVLPEPLEVVATGGFARAVARVSDCFDHVRPDLLLEGLRLLYLESEQR</sequence>
<dbReference type="EC" id="2.7.1.33" evidence="1"/>
<dbReference type="EMBL" id="AE017285">
    <property type="protein sequence ID" value="AAS94804.1"/>
    <property type="molecule type" value="Genomic_DNA"/>
</dbReference>
<dbReference type="RefSeq" id="WP_010937628.1">
    <property type="nucleotide sequence ID" value="NC_002937.3"/>
</dbReference>
<dbReference type="RefSeq" id="YP_009545.1">
    <property type="nucleotide sequence ID" value="NC_002937.3"/>
</dbReference>
<dbReference type="SMR" id="Q72F93"/>
<dbReference type="IntAct" id="Q72F93">
    <property type="interactions" value="1"/>
</dbReference>
<dbReference type="STRING" id="882.DVU_0321"/>
<dbReference type="PaxDb" id="882-DVU_0321"/>
<dbReference type="EnsemblBacteria" id="AAS94804">
    <property type="protein sequence ID" value="AAS94804"/>
    <property type="gene ID" value="DVU_0321"/>
</dbReference>
<dbReference type="KEGG" id="dvu:DVU_0321"/>
<dbReference type="PATRIC" id="fig|882.5.peg.305"/>
<dbReference type="eggNOG" id="COG1521">
    <property type="taxonomic scope" value="Bacteria"/>
</dbReference>
<dbReference type="HOGENOM" id="CLU_066627_1_0_7"/>
<dbReference type="OrthoDB" id="9804707at2"/>
<dbReference type="PhylomeDB" id="Q72F93"/>
<dbReference type="UniPathway" id="UPA00241">
    <property type="reaction ID" value="UER00352"/>
</dbReference>
<dbReference type="Proteomes" id="UP000002194">
    <property type="component" value="Chromosome"/>
</dbReference>
<dbReference type="GO" id="GO:0005737">
    <property type="term" value="C:cytoplasm"/>
    <property type="evidence" value="ECO:0007669"/>
    <property type="project" value="UniProtKB-SubCell"/>
</dbReference>
<dbReference type="GO" id="GO:0005524">
    <property type="term" value="F:ATP binding"/>
    <property type="evidence" value="ECO:0007669"/>
    <property type="project" value="UniProtKB-UniRule"/>
</dbReference>
<dbReference type="GO" id="GO:0046872">
    <property type="term" value="F:metal ion binding"/>
    <property type="evidence" value="ECO:0007669"/>
    <property type="project" value="UniProtKB-KW"/>
</dbReference>
<dbReference type="GO" id="GO:0004594">
    <property type="term" value="F:pantothenate kinase activity"/>
    <property type="evidence" value="ECO:0007669"/>
    <property type="project" value="UniProtKB-UniRule"/>
</dbReference>
<dbReference type="GO" id="GO:0015937">
    <property type="term" value="P:coenzyme A biosynthetic process"/>
    <property type="evidence" value="ECO:0007669"/>
    <property type="project" value="UniProtKB-UniRule"/>
</dbReference>
<dbReference type="CDD" id="cd24015">
    <property type="entry name" value="ASKHA_NBD_PanK-III"/>
    <property type="match status" value="1"/>
</dbReference>
<dbReference type="Gene3D" id="3.30.420.40">
    <property type="match status" value="2"/>
</dbReference>
<dbReference type="HAMAP" id="MF_01274">
    <property type="entry name" value="Pantothen_kinase_3"/>
    <property type="match status" value="1"/>
</dbReference>
<dbReference type="InterPro" id="IPR043129">
    <property type="entry name" value="ATPase_NBD"/>
</dbReference>
<dbReference type="InterPro" id="IPR004619">
    <property type="entry name" value="Type_III_PanK"/>
</dbReference>
<dbReference type="NCBIfam" id="TIGR00671">
    <property type="entry name" value="baf"/>
    <property type="match status" value="1"/>
</dbReference>
<dbReference type="NCBIfam" id="NF009855">
    <property type="entry name" value="PRK13321.1"/>
    <property type="match status" value="1"/>
</dbReference>
<dbReference type="PANTHER" id="PTHR34265">
    <property type="entry name" value="TYPE III PANTOTHENATE KINASE"/>
    <property type="match status" value="1"/>
</dbReference>
<dbReference type="PANTHER" id="PTHR34265:SF1">
    <property type="entry name" value="TYPE III PANTOTHENATE KINASE"/>
    <property type="match status" value="1"/>
</dbReference>
<dbReference type="Pfam" id="PF03309">
    <property type="entry name" value="Pan_kinase"/>
    <property type="match status" value="1"/>
</dbReference>
<dbReference type="SUPFAM" id="SSF53067">
    <property type="entry name" value="Actin-like ATPase domain"/>
    <property type="match status" value="2"/>
</dbReference>
<feature type="chain" id="PRO_0000267524" description="Type III pantothenate kinase">
    <location>
        <begin position="1"/>
        <end position="262"/>
    </location>
</feature>
<feature type="active site" description="Proton acceptor" evidence="1">
    <location>
        <position position="112"/>
    </location>
</feature>
<feature type="binding site" evidence="1">
    <location>
        <begin position="9"/>
        <end position="16"/>
    </location>
    <ligand>
        <name>ATP</name>
        <dbReference type="ChEBI" id="CHEBI:30616"/>
    </ligand>
</feature>
<feature type="binding site" evidence="1">
    <location>
        <position position="103"/>
    </location>
    <ligand>
        <name>substrate</name>
    </ligand>
</feature>
<feature type="binding site" evidence="1">
    <location>
        <begin position="110"/>
        <end position="113"/>
    </location>
    <ligand>
        <name>substrate</name>
    </ligand>
</feature>
<feature type="binding site" evidence="1">
    <location>
        <position position="134"/>
    </location>
    <ligand>
        <name>K(+)</name>
        <dbReference type="ChEBI" id="CHEBI:29103"/>
    </ligand>
</feature>
<feature type="binding site" evidence="1">
    <location>
        <position position="137"/>
    </location>
    <ligand>
        <name>ATP</name>
        <dbReference type="ChEBI" id="CHEBI:30616"/>
    </ligand>
</feature>
<feature type="binding site" evidence="1">
    <location>
        <position position="190"/>
    </location>
    <ligand>
        <name>substrate</name>
    </ligand>
</feature>
<reference key="1">
    <citation type="journal article" date="2004" name="Nat. Biotechnol.">
        <title>The genome sequence of the anaerobic, sulfate-reducing bacterium Desulfovibrio vulgaris Hildenborough.</title>
        <authorList>
            <person name="Heidelberg J.F."/>
            <person name="Seshadri R."/>
            <person name="Haveman S.A."/>
            <person name="Hemme C.L."/>
            <person name="Paulsen I.T."/>
            <person name="Kolonay J.F."/>
            <person name="Eisen J.A."/>
            <person name="Ward N.L."/>
            <person name="Methe B.A."/>
            <person name="Brinkac L.M."/>
            <person name="Daugherty S.C."/>
            <person name="DeBoy R.T."/>
            <person name="Dodson R.J."/>
            <person name="Durkin A.S."/>
            <person name="Madupu R."/>
            <person name="Nelson W.C."/>
            <person name="Sullivan S.A."/>
            <person name="Fouts D.E."/>
            <person name="Haft D.H."/>
            <person name="Selengut J."/>
            <person name="Peterson J.D."/>
            <person name="Davidsen T.M."/>
            <person name="Zafar N."/>
            <person name="Zhou L."/>
            <person name="Radune D."/>
            <person name="Dimitrov G."/>
            <person name="Hance M."/>
            <person name="Tran K."/>
            <person name="Khouri H.M."/>
            <person name="Gill J."/>
            <person name="Utterback T.R."/>
            <person name="Feldblyum T.V."/>
            <person name="Wall J.D."/>
            <person name="Voordouw G."/>
            <person name="Fraser C.M."/>
        </authorList>
    </citation>
    <scope>NUCLEOTIDE SEQUENCE [LARGE SCALE GENOMIC DNA]</scope>
    <source>
        <strain>ATCC 29579 / DSM 644 / CCUG 34227 / NCIMB 8303 / VKM B-1760 / Hildenborough</strain>
    </source>
</reference>